<protein>
    <recommendedName>
        <fullName evidence="1">4-hydroxy-3-methylbut-2-enyl diphosphate reductase</fullName>
        <shortName evidence="1">HMBPP reductase</shortName>
        <ecNumber evidence="1">1.17.7.4</ecNumber>
    </recommendedName>
</protein>
<dbReference type="EC" id="1.17.7.4" evidence="1"/>
<dbReference type="EMBL" id="CP000628">
    <property type="protein sequence ID" value="ACM25735.1"/>
    <property type="molecule type" value="Genomic_DNA"/>
</dbReference>
<dbReference type="RefSeq" id="WP_007693901.1">
    <property type="nucleotide sequence ID" value="NC_011985.1"/>
</dbReference>
<dbReference type="SMR" id="B9JAQ2"/>
<dbReference type="STRING" id="311403.Arad_1244"/>
<dbReference type="GeneID" id="86847557"/>
<dbReference type="KEGG" id="ara:Arad_1244"/>
<dbReference type="eggNOG" id="COG0761">
    <property type="taxonomic scope" value="Bacteria"/>
</dbReference>
<dbReference type="HOGENOM" id="CLU_027486_1_0_5"/>
<dbReference type="UniPathway" id="UPA00056">
    <property type="reaction ID" value="UER00097"/>
</dbReference>
<dbReference type="UniPathway" id="UPA00059">
    <property type="reaction ID" value="UER00105"/>
</dbReference>
<dbReference type="Proteomes" id="UP000001600">
    <property type="component" value="Chromosome 1"/>
</dbReference>
<dbReference type="GO" id="GO:0051539">
    <property type="term" value="F:4 iron, 4 sulfur cluster binding"/>
    <property type="evidence" value="ECO:0007669"/>
    <property type="project" value="UniProtKB-UniRule"/>
</dbReference>
<dbReference type="GO" id="GO:0051745">
    <property type="term" value="F:4-hydroxy-3-methylbut-2-enyl diphosphate reductase activity"/>
    <property type="evidence" value="ECO:0007669"/>
    <property type="project" value="UniProtKB-UniRule"/>
</dbReference>
<dbReference type="GO" id="GO:0046872">
    <property type="term" value="F:metal ion binding"/>
    <property type="evidence" value="ECO:0007669"/>
    <property type="project" value="UniProtKB-KW"/>
</dbReference>
<dbReference type="GO" id="GO:0050992">
    <property type="term" value="P:dimethylallyl diphosphate biosynthetic process"/>
    <property type="evidence" value="ECO:0007669"/>
    <property type="project" value="UniProtKB-UniRule"/>
</dbReference>
<dbReference type="GO" id="GO:0019288">
    <property type="term" value="P:isopentenyl diphosphate biosynthetic process, methylerythritol 4-phosphate pathway"/>
    <property type="evidence" value="ECO:0007669"/>
    <property type="project" value="UniProtKB-UniRule"/>
</dbReference>
<dbReference type="GO" id="GO:0016114">
    <property type="term" value="P:terpenoid biosynthetic process"/>
    <property type="evidence" value="ECO:0007669"/>
    <property type="project" value="UniProtKB-UniRule"/>
</dbReference>
<dbReference type="CDD" id="cd13944">
    <property type="entry name" value="lytB_ispH"/>
    <property type="match status" value="1"/>
</dbReference>
<dbReference type="Gene3D" id="3.40.50.11270">
    <property type="match status" value="1"/>
</dbReference>
<dbReference type="Gene3D" id="3.40.1010.20">
    <property type="entry name" value="4-hydroxy-3-methylbut-2-enyl diphosphate reductase, catalytic domain"/>
    <property type="match status" value="2"/>
</dbReference>
<dbReference type="HAMAP" id="MF_00191">
    <property type="entry name" value="IspH"/>
    <property type="match status" value="1"/>
</dbReference>
<dbReference type="InterPro" id="IPR003451">
    <property type="entry name" value="LytB/IspH"/>
</dbReference>
<dbReference type="NCBIfam" id="TIGR00216">
    <property type="entry name" value="ispH_lytB"/>
    <property type="match status" value="1"/>
</dbReference>
<dbReference type="NCBIfam" id="NF002190">
    <property type="entry name" value="PRK01045.1-4"/>
    <property type="match status" value="1"/>
</dbReference>
<dbReference type="PANTHER" id="PTHR30426">
    <property type="entry name" value="4-HYDROXY-3-METHYLBUT-2-ENYL DIPHOSPHATE REDUCTASE"/>
    <property type="match status" value="1"/>
</dbReference>
<dbReference type="PANTHER" id="PTHR30426:SF0">
    <property type="entry name" value="4-HYDROXY-3-METHYLBUT-2-ENYL DIPHOSPHATE REDUCTASE"/>
    <property type="match status" value="1"/>
</dbReference>
<dbReference type="Pfam" id="PF02401">
    <property type="entry name" value="LYTB"/>
    <property type="match status" value="1"/>
</dbReference>
<sequence length="335" mass="36283">MNIAVSKPDLTIRLCGPRGFCAGVDRAIQIVVLALKSYGAPVYVRHEIVHNRYVVEGLEAKGAIFVEELDEIPAEHRAQPVVFSAHGVPKAVPEDADARNLFYLDATCPLVSKVHKQAMRHNRLGRHVVLIGHAGHPEVIGTMGQLPEGTVSLIETVEDVDVYEPADPDNLGYVTQTTLSVDDTAGVIARLQERFPNLTAPSADSICYATTNRQEVVKQAAPGCDLFIVVGAPNSSNSKRLVEVALRAGATKSVLVQRAAEIDWDDIGDIKTVGLSAGASAPEVIVNEIIEAFRDRYSAVVELAETVKETENFLVNRELRNIELTTADMAFVNGE</sequence>
<keyword id="KW-0004">4Fe-4S</keyword>
<keyword id="KW-0408">Iron</keyword>
<keyword id="KW-0411">Iron-sulfur</keyword>
<keyword id="KW-0414">Isoprene biosynthesis</keyword>
<keyword id="KW-0479">Metal-binding</keyword>
<keyword id="KW-0560">Oxidoreductase</keyword>
<evidence type="ECO:0000255" key="1">
    <source>
        <dbReference type="HAMAP-Rule" id="MF_00191"/>
    </source>
</evidence>
<reference key="1">
    <citation type="journal article" date="2009" name="J. Bacteriol.">
        <title>Genome sequences of three Agrobacterium biovars help elucidate the evolution of multichromosome genomes in bacteria.</title>
        <authorList>
            <person name="Slater S.C."/>
            <person name="Goldman B.S."/>
            <person name="Goodner B."/>
            <person name="Setubal J.C."/>
            <person name="Farrand S.K."/>
            <person name="Nester E.W."/>
            <person name="Burr T.J."/>
            <person name="Banta L."/>
            <person name="Dickerman A.W."/>
            <person name="Paulsen I."/>
            <person name="Otten L."/>
            <person name="Suen G."/>
            <person name="Welch R."/>
            <person name="Almeida N.F."/>
            <person name="Arnold F."/>
            <person name="Burton O.T."/>
            <person name="Du Z."/>
            <person name="Ewing A."/>
            <person name="Godsy E."/>
            <person name="Heisel S."/>
            <person name="Houmiel K.L."/>
            <person name="Jhaveri J."/>
            <person name="Lu J."/>
            <person name="Miller N.M."/>
            <person name="Norton S."/>
            <person name="Chen Q."/>
            <person name="Phoolcharoen W."/>
            <person name="Ohlin V."/>
            <person name="Ondrusek D."/>
            <person name="Pride N."/>
            <person name="Stricklin S.L."/>
            <person name="Sun J."/>
            <person name="Wheeler C."/>
            <person name="Wilson L."/>
            <person name="Zhu H."/>
            <person name="Wood D.W."/>
        </authorList>
    </citation>
    <scope>NUCLEOTIDE SEQUENCE [LARGE SCALE GENOMIC DNA]</scope>
    <source>
        <strain>K84 / ATCC BAA-868</strain>
    </source>
</reference>
<organism>
    <name type="scientific">Rhizobium rhizogenes (strain K84 / ATCC BAA-868)</name>
    <name type="common">Agrobacterium radiobacter</name>
    <dbReference type="NCBI Taxonomy" id="311403"/>
    <lineage>
        <taxon>Bacteria</taxon>
        <taxon>Pseudomonadati</taxon>
        <taxon>Pseudomonadota</taxon>
        <taxon>Alphaproteobacteria</taxon>
        <taxon>Hyphomicrobiales</taxon>
        <taxon>Rhizobiaceae</taxon>
        <taxon>Rhizobium/Agrobacterium group</taxon>
        <taxon>Rhizobium</taxon>
    </lineage>
</organism>
<accession>B9JAQ2</accession>
<feature type="chain" id="PRO_1000124271" description="4-hydroxy-3-methylbut-2-enyl diphosphate reductase">
    <location>
        <begin position="1"/>
        <end position="335"/>
    </location>
</feature>
<feature type="active site" description="Proton donor" evidence="1">
    <location>
        <position position="138"/>
    </location>
</feature>
<feature type="binding site" evidence="1">
    <location>
        <position position="21"/>
    </location>
    <ligand>
        <name>[4Fe-4S] cluster</name>
        <dbReference type="ChEBI" id="CHEBI:49883"/>
    </ligand>
</feature>
<feature type="binding site" evidence="1">
    <location>
        <position position="50"/>
    </location>
    <ligand>
        <name>(2E)-4-hydroxy-3-methylbut-2-enyl diphosphate</name>
        <dbReference type="ChEBI" id="CHEBI:128753"/>
    </ligand>
</feature>
<feature type="binding site" evidence="1">
    <location>
        <position position="50"/>
    </location>
    <ligand>
        <name>dimethylallyl diphosphate</name>
        <dbReference type="ChEBI" id="CHEBI:57623"/>
    </ligand>
</feature>
<feature type="binding site" evidence="1">
    <location>
        <position position="50"/>
    </location>
    <ligand>
        <name>isopentenyl diphosphate</name>
        <dbReference type="ChEBI" id="CHEBI:128769"/>
    </ligand>
</feature>
<feature type="binding site" evidence="1">
    <location>
        <position position="86"/>
    </location>
    <ligand>
        <name>(2E)-4-hydroxy-3-methylbut-2-enyl diphosphate</name>
        <dbReference type="ChEBI" id="CHEBI:128753"/>
    </ligand>
</feature>
<feature type="binding site" evidence="1">
    <location>
        <position position="86"/>
    </location>
    <ligand>
        <name>dimethylallyl diphosphate</name>
        <dbReference type="ChEBI" id="CHEBI:57623"/>
    </ligand>
</feature>
<feature type="binding site" evidence="1">
    <location>
        <position position="86"/>
    </location>
    <ligand>
        <name>isopentenyl diphosphate</name>
        <dbReference type="ChEBI" id="CHEBI:128769"/>
    </ligand>
</feature>
<feature type="binding site" evidence="1">
    <location>
        <position position="108"/>
    </location>
    <ligand>
        <name>[4Fe-4S] cluster</name>
        <dbReference type="ChEBI" id="CHEBI:49883"/>
    </ligand>
</feature>
<feature type="binding site" evidence="1">
    <location>
        <position position="136"/>
    </location>
    <ligand>
        <name>(2E)-4-hydroxy-3-methylbut-2-enyl diphosphate</name>
        <dbReference type="ChEBI" id="CHEBI:128753"/>
    </ligand>
</feature>
<feature type="binding site" evidence="1">
    <location>
        <position position="136"/>
    </location>
    <ligand>
        <name>dimethylallyl diphosphate</name>
        <dbReference type="ChEBI" id="CHEBI:57623"/>
    </ligand>
</feature>
<feature type="binding site" evidence="1">
    <location>
        <position position="136"/>
    </location>
    <ligand>
        <name>isopentenyl diphosphate</name>
        <dbReference type="ChEBI" id="CHEBI:128769"/>
    </ligand>
</feature>
<feature type="binding site" evidence="1">
    <location>
        <position position="177"/>
    </location>
    <ligand>
        <name>(2E)-4-hydroxy-3-methylbut-2-enyl diphosphate</name>
        <dbReference type="ChEBI" id="CHEBI:128753"/>
    </ligand>
</feature>
<feature type="binding site" evidence="1">
    <location>
        <position position="207"/>
    </location>
    <ligand>
        <name>[4Fe-4S] cluster</name>
        <dbReference type="ChEBI" id="CHEBI:49883"/>
    </ligand>
</feature>
<feature type="binding site" evidence="1">
    <location>
        <position position="235"/>
    </location>
    <ligand>
        <name>(2E)-4-hydroxy-3-methylbut-2-enyl diphosphate</name>
        <dbReference type="ChEBI" id="CHEBI:128753"/>
    </ligand>
</feature>
<feature type="binding site" evidence="1">
    <location>
        <position position="235"/>
    </location>
    <ligand>
        <name>dimethylallyl diphosphate</name>
        <dbReference type="ChEBI" id="CHEBI:57623"/>
    </ligand>
</feature>
<feature type="binding site" evidence="1">
    <location>
        <position position="235"/>
    </location>
    <ligand>
        <name>isopentenyl diphosphate</name>
        <dbReference type="ChEBI" id="CHEBI:128769"/>
    </ligand>
</feature>
<feature type="binding site" evidence="1">
    <location>
        <position position="236"/>
    </location>
    <ligand>
        <name>(2E)-4-hydroxy-3-methylbut-2-enyl diphosphate</name>
        <dbReference type="ChEBI" id="CHEBI:128753"/>
    </ligand>
</feature>
<feature type="binding site" evidence="1">
    <location>
        <position position="236"/>
    </location>
    <ligand>
        <name>dimethylallyl diphosphate</name>
        <dbReference type="ChEBI" id="CHEBI:57623"/>
    </ligand>
</feature>
<feature type="binding site" evidence="1">
    <location>
        <position position="236"/>
    </location>
    <ligand>
        <name>isopentenyl diphosphate</name>
        <dbReference type="ChEBI" id="CHEBI:128769"/>
    </ligand>
</feature>
<feature type="binding site" evidence="1">
    <location>
        <position position="237"/>
    </location>
    <ligand>
        <name>(2E)-4-hydroxy-3-methylbut-2-enyl diphosphate</name>
        <dbReference type="ChEBI" id="CHEBI:128753"/>
    </ligand>
</feature>
<feature type="binding site" evidence="1">
    <location>
        <position position="237"/>
    </location>
    <ligand>
        <name>dimethylallyl diphosphate</name>
        <dbReference type="ChEBI" id="CHEBI:57623"/>
    </ligand>
</feature>
<feature type="binding site" evidence="1">
    <location>
        <position position="237"/>
    </location>
    <ligand>
        <name>isopentenyl diphosphate</name>
        <dbReference type="ChEBI" id="CHEBI:128769"/>
    </ligand>
</feature>
<feature type="binding site" evidence="1">
    <location>
        <position position="280"/>
    </location>
    <ligand>
        <name>(2E)-4-hydroxy-3-methylbut-2-enyl diphosphate</name>
        <dbReference type="ChEBI" id="CHEBI:128753"/>
    </ligand>
</feature>
<feature type="binding site" evidence="1">
    <location>
        <position position="280"/>
    </location>
    <ligand>
        <name>dimethylallyl diphosphate</name>
        <dbReference type="ChEBI" id="CHEBI:57623"/>
    </ligand>
</feature>
<feature type="binding site" evidence="1">
    <location>
        <position position="280"/>
    </location>
    <ligand>
        <name>isopentenyl diphosphate</name>
        <dbReference type="ChEBI" id="CHEBI:128769"/>
    </ligand>
</feature>
<proteinExistence type="inferred from homology"/>
<name>ISPH_RHIR8</name>
<gene>
    <name evidence="1" type="primary">ispH</name>
    <name type="ordered locus">Arad_1244</name>
</gene>
<comment type="function">
    <text evidence="1">Catalyzes the conversion of 1-hydroxy-2-methyl-2-(E)-butenyl 4-diphosphate (HMBPP) into a mixture of isopentenyl diphosphate (IPP) and dimethylallyl diphosphate (DMAPP). Acts in the terminal step of the DOXP/MEP pathway for isoprenoid precursor biosynthesis.</text>
</comment>
<comment type="catalytic activity">
    <reaction evidence="1">
        <text>isopentenyl diphosphate + 2 oxidized [2Fe-2S]-[ferredoxin] + H2O = (2E)-4-hydroxy-3-methylbut-2-enyl diphosphate + 2 reduced [2Fe-2S]-[ferredoxin] + 2 H(+)</text>
        <dbReference type="Rhea" id="RHEA:24488"/>
        <dbReference type="Rhea" id="RHEA-COMP:10000"/>
        <dbReference type="Rhea" id="RHEA-COMP:10001"/>
        <dbReference type="ChEBI" id="CHEBI:15377"/>
        <dbReference type="ChEBI" id="CHEBI:15378"/>
        <dbReference type="ChEBI" id="CHEBI:33737"/>
        <dbReference type="ChEBI" id="CHEBI:33738"/>
        <dbReference type="ChEBI" id="CHEBI:128753"/>
        <dbReference type="ChEBI" id="CHEBI:128769"/>
        <dbReference type="EC" id="1.17.7.4"/>
    </reaction>
</comment>
<comment type="catalytic activity">
    <reaction evidence="1">
        <text>dimethylallyl diphosphate + 2 oxidized [2Fe-2S]-[ferredoxin] + H2O = (2E)-4-hydroxy-3-methylbut-2-enyl diphosphate + 2 reduced [2Fe-2S]-[ferredoxin] + 2 H(+)</text>
        <dbReference type="Rhea" id="RHEA:24825"/>
        <dbReference type="Rhea" id="RHEA-COMP:10000"/>
        <dbReference type="Rhea" id="RHEA-COMP:10001"/>
        <dbReference type="ChEBI" id="CHEBI:15377"/>
        <dbReference type="ChEBI" id="CHEBI:15378"/>
        <dbReference type="ChEBI" id="CHEBI:33737"/>
        <dbReference type="ChEBI" id="CHEBI:33738"/>
        <dbReference type="ChEBI" id="CHEBI:57623"/>
        <dbReference type="ChEBI" id="CHEBI:128753"/>
        <dbReference type="EC" id="1.17.7.4"/>
    </reaction>
</comment>
<comment type="cofactor">
    <cofactor evidence="1">
        <name>[4Fe-4S] cluster</name>
        <dbReference type="ChEBI" id="CHEBI:49883"/>
    </cofactor>
    <text evidence="1">Binds 1 [4Fe-4S] cluster per subunit.</text>
</comment>
<comment type="pathway">
    <text evidence="1">Isoprenoid biosynthesis; dimethylallyl diphosphate biosynthesis; dimethylallyl diphosphate from (2E)-4-hydroxy-3-methylbutenyl diphosphate: step 1/1.</text>
</comment>
<comment type="pathway">
    <text evidence="1">Isoprenoid biosynthesis; isopentenyl diphosphate biosynthesis via DXP pathway; isopentenyl diphosphate from 1-deoxy-D-xylulose 5-phosphate: step 6/6.</text>
</comment>
<comment type="similarity">
    <text evidence="1">Belongs to the IspH family.</text>
</comment>